<protein>
    <recommendedName>
        <fullName evidence="1">Probable endonuclease 4</fullName>
        <ecNumber evidence="1">3.1.21.2</ecNumber>
    </recommendedName>
    <alternativeName>
        <fullName evidence="1">Endodeoxyribonuclease IV</fullName>
    </alternativeName>
    <alternativeName>
        <fullName evidence="1">Endonuclease IV</fullName>
    </alternativeName>
</protein>
<reference key="1">
    <citation type="journal article" date="2009" name="Appl. Environ. Microbiol.">
        <title>Genome analysis of the meat starter culture bacterium Staphylococcus carnosus TM300.</title>
        <authorList>
            <person name="Rosenstein R."/>
            <person name="Nerz C."/>
            <person name="Biswas L."/>
            <person name="Resch A."/>
            <person name="Raddatz G."/>
            <person name="Schuster S.C."/>
            <person name="Goetz F."/>
        </authorList>
    </citation>
    <scope>NUCLEOTIDE SEQUENCE [LARGE SCALE GENOMIC DNA]</scope>
    <source>
        <strain>TM300</strain>
    </source>
</reference>
<sequence length="296" mass="33242">MLIGSHVSMNGKKMLQGSAEEAHRLNEKTFMIYTGAPQNTRRKAIEDLNIEAGHEAMKEYGLSNIVVHAPYIINIANTQKPHVFELGVDFLQKEIERTEAIGAKDIVLHPGSHVGAGSEAGIKKIIEGLNEVLTNDNDVRIALETMAGKGSEVGRTFEELAQIIEGVNHNERLSICFDTCHTHDAGYKVKDDFDSVLEEFDNVIGLDRIKVLHVNDSKNEIGAHKDRHENIGFGHIGFDALNYIVHHEVFENIPKILETPFVGEDKKNKRPPYKHEIEMLETETFNPNMKEIIMSE</sequence>
<evidence type="ECO:0000255" key="1">
    <source>
        <dbReference type="HAMAP-Rule" id="MF_00152"/>
    </source>
</evidence>
<comment type="function">
    <text evidence="1">Endonuclease IV plays a role in DNA repair. It cleaves phosphodiester bonds at apurinic or apyrimidinic (AP) sites, generating a 3'-hydroxyl group and a 5'-terminal sugar phosphate.</text>
</comment>
<comment type="catalytic activity">
    <reaction evidence="1">
        <text>Endonucleolytic cleavage to 5'-phosphooligonucleotide end-products.</text>
        <dbReference type="EC" id="3.1.21.2"/>
    </reaction>
</comment>
<comment type="cofactor">
    <cofactor evidence="1">
        <name>Zn(2+)</name>
        <dbReference type="ChEBI" id="CHEBI:29105"/>
    </cofactor>
    <text evidence="1">Binds 3 Zn(2+) ions.</text>
</comment>
<comment type="similarity">
    <text evidence="1">Belongs to the AP endonuclease 2 family.</text>
</comment>
<accession>B9DNM8</accession>
<organism>
    <name type="scientific">Staphylococcus carnosus (strain TM300)</name>
    <dbReference type="NCBI Taxonomy" id="396513"/>
    <lineage>
        <taxon>Bacteria</taxon>
        <taxon>Bacillati</taxon>
        <taxon>Bacillota</taxon>
        <taxon>Bacilli</taxon>
        <taxon>Bacillales</taxon>
        <taxon>Staphylococcaceae</taxon>
        <taxon>Staphylococcus</taxon>
    </lineage>
</organism>
<proteinExistence type="inferred from homology"/>
<dbReference type="EC" id="3.1.21.2" evidence="1"/>
<dbReference type="EMBL" id="AM295250">
    <property type="protein sequence ID" value="CAL28086.1"/>
    <property type="molecule type" value="Genomic_DNA"/>
</dbReference>
<dbReference type="RefSeq" id="WP_015900427.1">
    <property type="nucleotide sequence ID" value="NC_012121.1"/>
</dbReference>
<dbReference type="SMR" id="B9DNM8"/>
<dbReference type="GeneID" id="93793604"/>
<dbReference type="KEGG" id="sca:SCA_1178"/>
<dbReference type="eggNOG" id="COG0648">
    <property type="taxonomic scope" value="Bacteria"/>
</dbReference>
<dbReference type="HOGENOM" id="CLU_025885_4_1_9"/>
<dbReference type="OrthoDB" id="9805666at2"/>
<dbReference type="BioCyc" id="SCAR396513:SCA_RS05905-MONOMER"/>
<dbReference type="Proteomes" id="UP000000444">
    <property type="component" value="Chromosome"/>
</dbReference>
<dbReference type="GO" id="GO:0008833">
    <property type="term" value="F:deoxyribonuclease IV (phage-T4-induced) activity"/>
    <property type="evidence" value="ECO:0007669"/>
    <property type="project" value="UniProtKB-UniRule"/>
</dbReference>
<dbReference type="GO" id="GO:0003677">
    <property type="term" value="F:DNA binding"/>
    <property type="evidence" value="ECO:0007669"/>
    <property type="project" value="InterPro"/>
</dbReference>
<dbReference type="GO" id="GO:0003906">
    <property type="term" value="F:DNA-(apurinic or apyrimidinic site) endonuclease activity"/>
    <property type="evidence" value="ECO:0007669"/>
    <property type="project" value="TreeGrafter"/>
</dbReference>
<dbReference type="GO" id="GO:0008081">
    <property type="term" value="F:phosphoric diester hydrolase activity"/>
    <property type="evidence" value="ECO:0007669"/>
    <property type="project" value="TreeGrafter"/>
</dbReference>
<dbReference type="GO" id="GO:0008270">
    <property type="term" value="F:zinc ion binding"/>
    <property type="evidence" value="ECO:0007669"/>
    <property type="project" value="UniProtKB-UniRule"/>
</dbReference>
<dbReference type="GO" id="GO:0006284">
    <property type="term" value="P:base-excision repair"/>
    <property type="evidence" value="ECO:0007669"/>
    <property type="project" value="TreeGrafter"/>
</dbReference>
<dbReference type="CDD" id="cd00019">
    <property type="entry name" value="AP2Ec"/>
    <property type="match status" value="1"/>
</dbReference>
<dbReference type="FunFam" id="3.20.20.150:FF:000001">
    <property type="entry name" value="Probable endonuclease 4"/>
    <property type="match status" value="1"/>
</dbReference>
<dbReference type="Gene3D" id="3.20.20.150">
    <property type="entry name" value="Divalent-metal-dependent TIM barrel enzymes"/>
    <property type="match status" value="1"/>
</dbReference>
<dbReference type="HAMAP" id="MF_00152">
    <property type="entry name" value="Nfo"/>
    <property type="match status" value="1"/>
</dbReference>
<dbReference type="InterPro" id="IPR001719">
    <property type="entry name" value="AP_endonuc_2"/>
</dbReference>
<dbReference type="InterPro" id="IPR018246">
    <property type="entry name" value="AP_endonuc_F2_Zn_BS"/>
</dbReference>
<dbReference type="InterPro" id="IPR036237">
    <property type="entry name" value="Xyl_isomerase-like_sf"/>
</dbReference>
<dbReference type="InterPro" id="IPR013022">
    <property type="entry name" value="Xyl_isomerase-like_TIM-brl"/>
</dbReference>
<dbReference type="NCBIfam" id="TIGR00587">
    <property type="entry name" value="nfo"/>
    <property type="match status" value="1"/>
</dbReference>
<dbReference type="NCBIfam" id="NF002196">
    <property type="entry name" value="PRK01060.1-1"/>
    <property type="match status" value="1"/>
</dbReference>
<dbReference type="PANTHER" id="PTHR21445:SF0">
    <property type="entry name" value="APURINIC-APYRIMIDINIC ENDONUCLEASE"/>
    <property type="match status" value="1"/>
</dbReference>
<dbReference type="PANTHER" id="PTHR21445">
    <property type="entry name" value="ENDONUCLEASE IV ENDODEOXYRIBONUCLEASE IV"/>
    <property type="match status" value="1"/>
</dbReference>
<dbReference type="Pfam" id="PF01261">
    <property type="entry name" value="AP_endonuc_2"/>
    <property type="match status" value="1"/>
</dbReference>
<dbReference type="SMART" id="SM00518">
    <property type="entry name" value="AP2Ec"/>
    <property type="match status" value="1"/>
</dbReference>
<dbReference type="SUPFAM" id="SSF51658">
    <property type="entry name" value="Xylose isomerase-like"/>
    <property type="match status" value="1"/>
</dbReference>
<dbReference type="PROSITE" id="PS00729">
    <property type="entry name" value="AP_NUCLEASE_F2_1"/>
    <property type="match status" value="1"/>
</dbReference>
<dbReference type="PROSITE" id="PS00730">
    <property type="entry name" value="AP_NUCLEASE_F2_2"/>
    <property type="match status" value="1"/>
</dbReference>
<dbReference type="PROSITE" id="PS00731">
    <property type="entry name" value="AP_NUCLEASE_F2_3"/>
    <property type="match status" value="1"/>
</dbReference>
<dbReference type="PROSITE" id="PS51432">
    <property type="entry name" value="AP_NUCLEASE_F2_4"/>
    <property type="match status" value="1"/>
</dbReference>
<name>END4_STACT</name>
<feature type="chain" id="PRO_1000123337" description="Probable endonuclease 4">
    <location>
        <begin position="1"/>
        <end position="296"/>
    </location>
</feature>
<feature type="binding site" evidence="1">
    <location>
        <position position="68"/>
    </location>
    <ligand>
        <name>Zn(2+)</name>
        <dbReference type="ChEBI" id="CHEBI:29105"/>
        <label>1</label>
    </ligand>
</feature>
<feature type="binding site" evidence="1">
    <location>
        <position position="109"/>
    </location>
    <ligand>
        <name>Zn(2+)</name>
        <dbReference type="ChEBI" id="CHEBI:29105"/>
        <label>1</label>
    </ligand>
</feature>
<feature type="binding site" evidence="1">
    <location>
        <position position="144"/>
    </location>
    <ligand>
        <name>Zn(2+)</name>
        <dbReference type="ChEBI" id="CHEBI:29105"/>
        <label>1</label>
    </ligand>
</feature>
<feature type="binding site" evidence="1">
    <location>
        <position position="144"/>
    </location>
    <ligand>
        <name>Zn(2+)</name>
        <dbReference type="ChEBI" id="CHEBI:29105"/>
        <label>2</label>
    </ligand>
</feature>
<feature type="binding site" evidence="1">
    <location>
        <position position="178"/>
    </location>
    <ligand>
        <name>Zn(2+)</name>
        <dbReference type="ChEBI" id="CHEBI:29105"/>
        <label>2</label>
    </ligand>
</feature>
<feature type="binding site" evidence="1">
    <location>
        <position position="181"/>
    </location>
    <ligand>
        <name>Zn(2+)</name>
        <dbReference type="ChEBI" id="CHEBI:29105"/>
        <label>3</label>
    </ligand>
</feature>
<feature type="binding site" evidence="1">
    <location>
        <position position="213"/>
    </location>
    <ligand>
        <name>Zn(2+)</name>
        <dbReference type="ChEBI" id="CHEBI:29105"/>
        <label>2</label>
    </ligand>
</feature>
<feature type="binding site" evidence="1">
    <location>
        <position position="226"/>
    </location>
    <ligand>
        <name>Zn(2+)</name>
        <dbReference type="ChEBI" id="CHEBI:29105"/>
        <label>3</label>
    </ligand>
</feature>
<feature type="binding site" evidence="1">
    <location>
        <position position="228"/>
    </location>
    <ligand>
        <name>Zn(2+)</name>
        <dbReference type="ChEBI" id="CHEBI:29105"/>
        <label>3</label>
    </ligand>
</feature>
<feature type="binding site" evidence="1">
    <location>
        <position position="258"/>
    </location>
    <ligand>
        <name>Zn(2+)</name>
        <dbReference type="ChEBI" id="CHEBI:29105"/>
        <label>2</label>
    </ligand>
</feature>
<gene>
    <name evidence="1" type="primary">nfo</name>
    <name type="ordered locus">Sca_1178</name>
</gene>
<keyword id="KW-0227">DNA damage</keyword>
<keyword id="KW-0234">DNA repair</keyword>
<keyword id="KW-0255">Endonuclease</keyword>
<keyword id="KW-0378">Hydrolase</keyword>
<keyword id="KW-0479">Metal-binding</keyword>
<keyword id="KW-0540">Nuclease</keyword>
<keyword id="KW-1185">Reference proteome</keyword>
<keyword id="KW-0862">Zinc</keyword>